<organism>
    <name type="scientific">Fritillaria unibracteata</name>
    <name type="common">Sichuan fritillary</name>
    <dbReference type="NCBI Taxonomy" id="152095"/>
    <lineage>
        <taxon>Eukaryota</taxon>
        <taxon>Viridiplantae</taxon>
        <taxon>Streptophyta</taxon>
        <taxon>Embryophyta</taxon>
        <taxon>Tracheophyta</taxon>
        <taxon>Spermatophyta</taxon>
        <taxon>Magnoliopsida</taxon>
        <taxon>Liliopsida</taxon>
        <taxon>Liliales</taxon>
        <taxon>Liliaceae</taxon>
        <taxon>Fritillaria</taxon>
    </lineage>
</organism>
<accession>P0DO55</accession>
<proteinExistence type="evidence at protein level"/>
<feature type="chain" id="PRO_0000456811" description="Phenylalanine/tyrosine ammonia-lyase 1">
    <location>
        <begin position="1"/>
        <end position="722"/>
    </location>
</feature>
<feature type="active site" description="Proton donor/acceptor" evidence="3">
    <location>
        <position position="114"/>
    </location>
</feature>
<feature type="binding site" evidence="3">
    <location>
        <position position="266"/>
    </location>
    <ligand>
        <name>(E)-cinnamate</name>
        <dbReference type="ChEBI" id="CHEBI:15669"/>
    </ligand>
</feature>
<feature type="binding site" evidence="3">
    <location>
        <position position="354"/>
    </location>
    <ligand>
        <name>(E)-cinnamate</name>
        <dbReference type="ChEBI" id="CHEBI:15669"/>
    </ligand>
</feature>
<feature type="binding site" evidence="3">
    <location>
        <position position="360"/>
    </location>
    <ligand>
        <name>(E)-cinnamate</name>
        <dbReference type="ChEBI" id="CHEBI:15669"/>
    </ligand>
</feature>
<feature type="binding site" evidence="3">
    <location>
        <position position="390"/>
    </location>
    <ligand>
        <name>(E)-cinnamate</name>
        <dbReference type="ChEBI" id="CHEBI:15669"/>
    </ligand>
</feature>
<feature type="binding site" evidence="1">
    <location>
        <position position="462"/>
    </location>
    <ligand>
        <name>(E)-cinnamate</name>
        <dbReference type="ChEBI" id="CHEBI:15669"/>
    </ligand>
</feature>
<feature type="binding site" evidence="1">
    <location>
        <position position="490"/>
    </location>
    <ligand>
        <name>(E)-cinnamate</name>
        <dbReference type="ChEBI" id="CHEBI:15669"/>
    </ligand>
</feature>
<feature type="binding site" evidence="3">
    <location>
        <position position="493"/>
    </location>
    <ligand>
        <name>(E)-cinnamate</name>
        <dbReference type="ChEBI" id="CHEBI:15669"/>
    </ligand>
</feature>
<feature type="modified residue" description="2,3-didehydroalanine (Ser)" evidence="4">
    <location>
        <position position="209"/>
    </location>
</feature>
<feature type="cross-link" description="5-imidazolinone (Ser-Gly)" evidence="3">
    <location>
        <begin position="208"/>
        <end position="210"/>
    </location>
</feature>
<feature type="mutagenesis site" description="Increased activity toward L-tyrosine (L-Tyr) but reduced ability to use L-phenylalanine (L-Phe) as substrate." evidence="5">
    <original>F</original>
    <variation>H</variation>
    <location>
        <position position="141"/>
    </location>
</feature>
<feature type="mutagenesis site" description="Higher binding affinity for L-phenylalanine (L-Phe) and decrease catalytic efficiency." evidence="5">
    <original>S</original>
    <variation>A</variation>
    <location>
        <position position="208"/>
    </location>
</feature>
<feature type="mutagenesis site" description="Higher binding affinity for L-phenylalanine (L-Phe) and decrease catalytic efficiency." evidence="5">
    <original>I</original>
    <variation>P</variation>
    <location>
        <position position="218"/>
    </location>
</feature>
<feature type="mutagenesis site" description="Higher binding affinity for L-phenylalanine (L-Phe) and decrease catalytic efficiency." evidence="5">
    <original>E</original>
    <variation>N</variation>
    <location>
        <position position="490"/>
    </location>
</feature>
<dbReference type="EC" id="4.3.1.25" evidence="5"/>
<dbReference type="SMR" id="P0DO55"/>
<dbReference type="UniPathway" id="UPA00713">
    <property type="reaction ID" value="UER00725"/>
</dbReference>
<dbReference type="GO" id="GO:0005737">
    <property type="term" value="C:cytoplasm"/>
    <property type="evidence" value="ECO:0000314"/>
    <property type="project" value="UniProtKB"/>
</dbReference>
<dbReference type="GO" id="GO:0045548">
    <property type="term" value="F:phenylalanine ammonia-lyase activity"/>
    <property type="evidence" value="ECO:0000314"/>
    <property type="project" value="UniProtKB"/>
</dbReference>
<dbReference type="GO" id="GO:0052883">
    <property type="term" value="F:tyrosine ammonia-lyase activity"/>
    <property type="evidence" value="ECO:0000314"/>
    <property type="project" value="UniProtKB"/>
</dbReference>
<dbReference type="GO" id="GO:0009800">
    <property type="term" value="P:cinnamic acid biosynthetic process"/>
    <property type="evidence" value="ECO:0007669"/>
    <property type="project" value="UniProtKB-UniPathway"/>
</dbReference>
<dbReference type="GO" id="GO:0006559">
    <property type="term" value="P:L-phenylalanine catabolic process"/>
    <property type="evidence" value="ECO:0007669"/>
    <property type="project" value="UniProtKB-KW"/>
</dbReference>
<dbReference type="GO" id="GO:0009809">
    <property type="term" value="P:lignin biosynthetic process"/>
    <property type="evidence" value="ECO:0000315"/>
    <property type="project" value="UniProtKB"/>
</dbReference>
<dbReference type="GO" id="GO:0051289">
    <property type="term" value="P:protein homotetramerization"/>
    <property type="evidence" value="ECO:0000314"/>
    <property type="project" value="UniProtKB"/>
</dbReference>
<dbReference type="GO" id="GO:0009414">
    <property type="term" value="P:response to water deprivation"/>
    <property type="evidence" value="ECO:0000315"/>
    <property type="project" value="UniProtKB"/>
</dbReference>
<dbReference type="GO" id="GO:0009697">
    <property type="term" value="P:salicylic acid biosynthetic process"/>
    <property type="evidence" value="ECO:0000315"/>
    <property type="project" value="UniProtKB"/>
</dbReference>
<dbReference type="CDD" id="cd00332">
    <property type="entry name" value="PAL-HAL"/>
    <property type="match status" value="1"/>
</dbReference>
<dbReference type="FunFam" id="1.10.274.20:FF:000001">
    <property type="entry name" value="Phenylalanine ammonia-lyase"/>
    <property type="match status" value="1"/>
</dbReference>
<dbReference type="FunFam" id="1.10.275.10:FF:000009">
    <property type="entry name" value="Phenylalanine ammonia-lyase"/>
    <property type="match status" value="1"/>
</dbReference>
<dbReference type="FunFam" id="1.20.200.10:FF:000009">
    <property type="entry name" value="Phenylalanine ammonia-lyase"/>
    <property type="match status" value="1"/>
</dbReference>
<dbReference type="Gene3D" id="1.20.200.10">
    <property type="entry name" value="Fumarase/aspartase (Central domain)"/>
    <property type="match status" value="1"/>
</dbReference>
<dbReference type="Gene3D" id="1.10.275.10">
    <property type="entry name" value="Fumarase/aspartase (N-terminal domain)"/>
    <property type="match status" value="1"/>
</dbReference>
<dbReference type="Gene3D" id="1.10.274.20">
    <property type="entry name" value="Phenylalanine ammonia-lyase 1, domain 3"/>
    <property type="match status" value="1"/>
</dbReference>
<dbReference type="InterPro" id="IPR001106">
    <property type="entry name" value="Aromatic_Lyase"/>
</dbReference>
<dbReference type="InterPro" id="IPR024083">
    <property type="entry name" value="Fumarase/histidase_N"/>
</dbReference>
<dbReference type="InterPro" id="IPR008948">
    <property type="entry name" value="L-Aspartase-like"/>
</dbReference>
<dbReference type="InterPro" id="IPR022313">
    <property type="entry name" value="Phe/His_NH3-lyase_AS"/>
</dbReference>
<dbReference type="InterPro" id="IPR005922">
    <property type="entry name" value="Phe_NH3-lyase"/>
</dbReference>
<dbReference type="InterPro" id="IPR023144">
    <property type="entry name" value="Phe_NH3-lyase_shielding_dom_sf"/>
</dbReference>
<dbReference type="NCBIfam" id="TIGR01226">
    <property type="entry name" value="phe_am_lyase"/>
    <property type="match status" value="1"/>
</dbReference>
<dbReference type="PANTHER" id="PTHR10362">
    <property type="entry name" value="HISTIDINE AMMONIA-LYASE"/>
    <property type="match status" value="1"/>
</dbReference>
<dbReference type="Pfam" id="PF00221">
    <property type="entry name" value="Lyase_aromatic"/>
    <property type="match status" value="1"/>
</dbReference>
<dbReference type="SUPFAM" id="SSF48557">
    <property type="entry name" value="L-aspartase-like"/>
    <property type="match status" value="1"/>
</dbReference>
<dbReference type="PROSITE" id="PS00488">
    <property type="entry name" value="PAL_HISTIDASE"/>
    <property type="match status" value="1"/>
</dbReference>
<keyword id="KW-0963">Cytoplasm</keyword>
<keyword id="KW-0456">Lyase</keyword>
<keyword id="KW-0585">Phenylalanine catabolism</keyword>
<keyword id="KW-0587">Phenylpropanoid metabolism</keyword>
<comment type="function">
    <text evidence="2 5">Key enzyme of plant metabolism catalyzing the first reaction in the biosynthesis from L-phenylalanine of a wide variety of natural products based on the phenylpropane skeleton (By similarity). Can use L-phenylalanine (L-Phe) as substrate more efficiently than L-tyrosine (L-Tyr) (PubMed:35643154). Promotes drought tolerance by inducing the biosynthesis and accumulation of salicylic acid (SA) and lignin (PubMed:35643154).</text>
</comment>
<comment type="catalytic activity">
    <reaction evidence="5">
        <text>L-tyrosine = (E)-4-coumarate + NH4(+)</text>
        <dbReference type="Rhea" id="RHEA:24906"/>
        <dbReference type="ChEBI" id="CHEBI:12876"/>
        <dbReference type="ChEBI" id="CHEBI:28938"/>
        <dbReference type="ChEBI" id="CHEBI:58315"/>
        <dbReference type="EC" id="4.3.1.25"/>
    </reaction>
</comment>
<comment type="catalytic activity">
    <reaction evidence="5">
        <text>L-phenylalanine = (E)-cinnamate + NH4(+)</text>
        <dbReference type="Rhea" id="RHEA:21384"/>
        <dbReference type="ChEBI" id="CHEBI:15669"/>
        <dbReference type="ChEBI" id="CHEBI:28938"/>
        <dbReference type="ChEBI" id="CHEBI:58095"/>
        <dbReference type="EC" id="4.3.1.25"/>
    </reaction>
</comment>
<comment type="activity regulation">
    <text evidence="5">Inhibited by zinc ions Zn(2+), but slightly promoted by magnesium Mg(2+) and calcium Ca(2+) ions (PubMed:35643154). Keeps approximately 82 percent and 37 percent of enzymatic activity after 240 minutes of treatment at 60 and 70 degrees Celsius, respectively (PubMed:35643154). Repressed deamination activity by beta-mercaptoethanol (PubMed:35643154).</text>
</comment>
<comment type="biophysicochemical properties">
    <kinetics>
        <KM evidence="5">255.987 uM for L-phenylalanine</KM>
        <KM evidence="5">1245.354 uM for L-tyrosine</KM>
        <Vmax evidence="5">1.309 umol/min/mg enzyme with L-phenylalanine as substrate</Vmax>
        <Vmax evidence="5">1.327 umol/min/mg enzyme with L-tyrosine as substrate</Vmax>
        <text evidence="5">kcat is 102.4 min(-1) with L-phenylalanine as substrate (PubMed:35643154). kcat is 0.103 min(-1) with L-tyrosine as substrate (PubMed:35643154).</text>
    </kinetics>
    <phDependence>
        <text evidence="5">Optimum pH is 7.9-8.5.</text>
    </phDependence>
    <temperatureDependence>
        <text evidence="5">Optimum temperature is 50 degrees Celsius.</text>
    </temperatureDependence>
</comment>
<comment type="pathway">
    <text evidence="7">Phenylpropanoid metabolism; trans-cinnamate biosynthesis; trans-cinnamate from L-phenylalanine: step 1/1.</text>
</comment>
<comment type="subunit">
    <text evidence="6">Homotetramer.</text>
</comment>
<comment type="subcellular location">
    <subcellularLocation>
        <location evidence="5">Cytoplasm</location>
    </subcellularLocation>
</comment>
<comment type="tissue specificity">
    <text evidence="5">At the reproductive stage, mostly expressed in leaves and florets, and, to a lower extent, in bulbus and stems.</text>
</comment>
<comment type="PTM">
    <text evidence="3">Contains an active site 4-methylidene-imidazol-5-one (MIO), which is formed autocatalytically by cyclization and dehydration of residues Ser-Ser-Gly.</text>
</comment>
<comment type="similarity">
    <text evidence="7">Belongs to the PAL/histidase family.</text>
</comment>
<gene>
    <name evidence="6" type="primary">PAL1</name>
</gene>
<evidence type="ECO:0000250" key="1">
    <source>
        <dbReference type="UniProtKB" id="P11544"/>
    </source>
</evidence>
<evidence type="ECO:0000250" key="2">
    <source>
        <dbReference type="UniProtKB" id="P24481"/>
    </source>
</evidence>
<evidence type="ECO:0000250" key="3">
    <source>
        <dbReference type="UniProtKB" id="Q68G84"/>
    </source>
</evidence>
<evidence type="ECO:0000255" key="4">
    <source>
        <dbReference type="PROSITE-ProRule" id="PRU10122"/>
    </source>
</evidence>
<evidence type="ECO:0000269" key="5">
    <source>
    </source>
</evidence>
<evidence type="ECO:0000303" key="6">
    <source>
    </source>
</evidence>
<evidence type="ECO:0000305" key="7"/>
<reference key="1">
    <citation type="journal article" date="2022" name="Int. J. Biol. Macromol.">
        <title>A phenylalanine ammonia lyase from Fritillaria unibracteata promotes drought tolerance by regulating lignin biosynthesis and SA signaling pathway.</title>
        <authorList>
            <person name="Qin Y."/>
            <person name="Li Q."/>
            <person name="An Q."/>
            <person name="Li D."/>
            <person name="Huang S."/>
            <person name="Zhao Y."/>
            <person name="Chen W."/>
            <person name="Zhou J."/>
            <person name="Liao H."/>
        </authorList>
    </citation>
    <scope>FUNCTION</scope>
    <scope>MUTAGENESIS OF PHE-141; SER-208; ILE-218 AND GLU-490</scope>
    <scope>CATALYTIC ACTIVITY</scope>
    <scope>BIOPHYSICOCHEMICAL PROPERTIES</scope>
    <scope>TISSUE SPECIFICITY</scope>
    <scope>ACTIVITY REGULATION</scope>
    <scope>SUBUNIT</scope>
</reference>
<protein>
    <recommendedName>
        <fullName evidence="6">Phenylalanine/tyrosine ammonia-lyase 1</fullName>
        <shortName evidence="6">FuPAL1</shortName>
        <ecNumber evidence="5">4.3.1.25</ecNumber>
    </recommendedName>
</protein>
<name>PAL1_FRIUN</name>
<sequence>MAHIGNGNGNGNGFANGNGNGNGAAGLCLHPDPLNWRAAADALTGSHLDEVRRMAAEFRKPVVRLEGASLSISQVAAVAAGREVKVELSEEARGRVKASSDWVMDSMGKGTDSYGVTTGFGATSHRRTKEGGALQKELIRFLNAGIFGAGPEDGQTLPPTTTRAAMLVRVNTLLQGYSGIRFEILEAISSLLNHNVTPILPLRGTISSSGDLVPLSYIAGVLIGRPNSKSIGPDGTYVDATEAFRLAGISGGFFELQPKEGLAMVNGTAVGSGLASMVLFEANIIAVLAEVISAIFCEVMQGKPEFTDHLTHKLKHHPGQIEAAAIMEHILAGSSYMKMAAKIHEQDPLQKPKQDRYALRTSPQWLGPLIEVIRTSTKSIEREINSVNDNPLIDVSRNKAIHGGNFQGTPIGVSMDNTRLVLAAIGKLMFAQISELVNDFYNNGLPSNLSGGRNPSLDYGFKGAEIAMASYCSELQFLANPVTNHVQSAEQHNQDVNSLGLISARKTAEAVEILKLMSSTFLVALCQAVDLRHLEENLKAAVKNTVSQVAKRVLTMGVNGELHPSRFCEKDLIKVIDREYVFAYADDPCSATYPLMQKLRGVLVEHALVNGDKEKEMGTSIFQKITAFEEELKATLPKEVEGVRVAFDNGTNVIPNRISECRSYPLYKFVREELGAGYLTGEKVVSPGEEFNKVFVAMNQWKLIDPLLECLSDWNGAPLPIC</sequence>